<keyword id="KW-0028">Amino-acid biosynthesis</keyword>
<keyword id="KW-0055">Arginine biosynthesis</keyword>
<keyword id="KW-0963">Cytoplasm</keyword>
<keyword id="KW-0456">Lyase</keyword>
<reference key="1">
    <citation type="submission" date="2007-06" db="EMBL/GenBank/DDBJ databases">
        <authorList>
            <person name="Brinkac L.M."/>
            <person name="Daugherty S."/>
            <person name="Dodson R.J."/>
            <person name="Madupu R."/>
            <person name="Brown J.L."/>
            <person name="Bruce D."/>
            <person name="Detter C."/>
            <person name="Munk C."/>
            <person name="Smith L.A."/>
            <person name="Smith T.J."/>
            <person name="White O."/>
            <person name="Brettin T.S."/>
        </authorList>
    </citation>
    <scope>NUCLEOTIDE SEQUENCE [LARGE SCALE GENOMIC DNA]</scope>
    <source>
        <strain>Langeland / NCTC 10281 / Type F</strain>
    </source>
</reference>
<accession>A7GGQ8</accession>
<gene>
    <name evidence="1" type="primary">argH</name>
    <name type="ordered locus">CLI_2735</name>
</gene>
<feature type="chain" id="PRO_1000000469" description="Argininosuccinate lyase">
    <location>
        <begin position="1"/>
        <end position="440"/>
    </location>
</feature>
<evidence type="ECO:0000255" key="1">
    <source>
        <dbReference type="HAMAP-Rule" id="MF_00006"/>
    </source>
</evidence>
<name>ARLY_CLOBL</name>
<proteinExistence type="inferred from homology"/>
<dbReference type="EC" id="4.3.2.1" evidence="1"/>
<dbReference type="EMBL" id="CP000728">
    <property type="protein sequence ID" value="ABS42428.1"/>
    <property type="molecule type" value="Genomic_DNA"/>
</dbReference>
<dbReference type="RefSeq" id="WP_012100533.1">
    <property type="nucleotide sequence ID" value="NC_009699.1"/>
</dbReference>
<dbReference type="SMR" id="A7GGQ8"/>
<dbReference type="KEGG" id="cbf:CLI_2735"/>
<dbReference type="HOGENOM" id="CLU_027272_2_3_9"/>
<dbReference type="UniPathway" id="UPA00068">
    <property type="reaction ID" value="UER00114"/>
</dbReference>
<dbReference type="Proteomes" id="UP000002410">
    <property type="component" value="Chromosome"/>
</dbReference>
<dbReference type="GO" id="GO:0005829">
    <property type="term" value="C:cytosol"/>
    <property type="evidence" value="ECO:0007669"/>
    <property type="project" value="TreeGrafter"/>
</dbReference>
<dbReference type="GO" id="GO:0004056">
    <property type="term" value="F:argininosuccinate lyase activity"/>
    <property type="evidence" value="ECO:0007669"/>
    <property type="project" value="UniProtKB-UniRule"/>
</dbReference>
<dbReference type="GO" id="GO:0042450">
    <property type="term" value="P:arginine biosynthetic process via ornithine"/>
    <property type="evidence" value="ECO:0007669"/>
    <property type="project" value="InterPro"/>
</dbReference>
<dbReference type="GO" id="GO:0006526">
    <property type="term" value="P:L-arginine biosynthetic process"/>
    <property type="evidence" value="ECO:0007669"/>
    <property type="project" value="UniProtKB-UniRule"/>
</dbReference>
<dbReference type="CDD" id="cd01359">
    <property type="entry name" value="Argininosuccinate_lyase"/>
    <property type="match status" value="1"/>
</dbReference>
<dbReference type="FunFam" id="1.10.275.10:FF:000002">
    <property type="entry name" value="Argininosuccinate lyase"/>
    <property type="match status" value="1"/>
</dbReference>
<dbReference type="FunFam" id="1.10.40.30:FF:000001">
    <property type="entry name" value="Argininosuccinate lyase"/>
    <property type="match status" value="1"/>
</dbReference>
<dbReference type="FunFam" id="1.20.200.10:FF:000002">
    <property type="entry name" value="Argininosuccinate lyase"/>
    <property type="match status" value="1"/>
</dbReference>
<dbReference type="Gene3D" id="1.10.40.30">
    <property type="entry name" value="Fumarase/aspartase (C-terminal domain)"/>
    <property type="match status" value="1"/>
</dbReference>
<dbReference type="Gene3D" id="1.20.200.10">
    <property type="entry name" value="Fumarase/aspartase (Central domain)"/>
    <property type="match status" value="1"/>
</dbReference>
<dbReference type="Gene3D" id="1.10.275.10">
    <property type="entry name" value="Fumarase/aspartase (N-terminal domain)"/>
    <property type="match status" value="1"/>
</dbReference>
<dbReference type="HAMAP" id="MF_00006">
    <property type="entry name" value="Arg_succ_lyase"/>
    <property type="match status" value="1"/>
</dbReference>
<dbReference type="InterPro" id="IPR029419">
    <property type="entry name" value="Arg_succ_lyase_C"/>
</dbReference>
<dbReference type="InterPro" id="IPR009049">
    <property type="entry name" value="Argininosuccinate_lyase"/>
</dbReference>
<dbReference type="InterPro" id="IPR024083">
    <property type="entry name" value="Fumarase/histidase_N"/>
</dbReference>
<dbReference type="InterPro" id="IPR020557">
    <property type="entry name" value="Fumarate_lyase_CS"/>
</dbReference>
<dbReference type="InterPro" id="IPR000362">
    <property type="entry name" value="Fumarate_lyase_fam"/>
</dbReference>
<dbReference type="InterPro" id="IPR022761">
    <property type="entry name" value="Fumarate_lyase_N"/>
</dbReference>
<dbReference type="InterPro" id="IPR008948">
    <property type="entry name" value="L-Aspartase-like"/>
</dbReference>
<dbReference type="NCBIfam" id="TIGR00838">
    <property type="entry name" value="argH"/>
    <property type="match status" value="1"/>
</dbReference>
<dbReference type="PANTHER" id="PTHR43814">
    <property type="entry name" value="ARGININOSUCCINATE LYASE"/>
    <property type="match status" value="1"/>
</dbReference>
<dbReference type="PANTHER" id="PTHR43814:SF1">
    <property type="entry name" value="ARGININOSUCCINATE LYASE"/>
    <property type="match status" value="1"/>
</dbReference>
<dbReference type="Pfam" id="PF14698">
    <property type="entry name" value="ASL_C2"/>
    <property type="match status" value="1"/>
</dbReference>
<dbReference type="Pfam" id="PF00206">
    <property type="entry name" value="Lyase_1"/>
    <property type="match status" value="1"/>
</dbReference>
<dbReference type="PRINTS" id="PR00145">
    <property type="entry name" value="ARGSUCLYASE"/>
</dbReference>
<dbReference type="PRINTS" id="PR00149">
    <property type="entry name" value="FUMRATELYASE"/>
</dbReference>
<dbReference type="SUPFAM" id="SSF48557">
    <property type="entry name" value="L-aspartase-like"/>
    <property type="match status" value="1"/>
</dbReference>
<dbReference type="PROSITE" id="PS00163">
    <property type="entry name" value="FUMARATE_LYASES"/>
    <property type="match status" value="1"/>
</dbReference>
<organism>
    <name type="scientific">Clostridium botulinum (strain Langeland / NCTC 10281 / Type F)</name>
    <dbReference type="NCBI Taxonomy" id="441772"/>
    <lineage>
        <taxon>Bacteria</taxon>
        <taxon>Bacillati</taxon>
        <taxon>Bacillota</taxon>
        <taxon>Clostridia</taxon>
        <taxon>Eubacteriales</taxon>
        <taxon>Clostridiaceae</taxon>
        <taxon>Clostridium</taxon>
    </lineage>
</organism>
<comment type="catalytic activity">
    <reaction evidence="1">
        <text>2-(N(omega)-L-arginino)succinate = fumarate + L-arginine</text>
        <dbReference type="Rhea" id="RHEA:24020"/>
        <dbReference type="ChEBI" id="CHEBI:29806"/>
        <dbReference type="ChEBI" id="CHEBI:32682"/>
        <dbReference type="ChEBI" id="CHEBI:57472"/>
        <dbReference type="EC" id="4.3.2.1"/>
    </reaction>
</comment>
<comment type="pathway">
    <text evidence="1">Amino-acid biosynthesis; L-arginine biosynthesis; L-arginine from L-ornithine and carbamoyl phosphate: step 3/3.</text>
</comment>
<comment type="subcellular location">
    <subcellularLocation>
        <location evidence="1">Cytoplasm</location>
    </subcellularLocation>
</comment>
<comment type="similarity">
    <text evidence="1">Belongs to the lyase 1 family. Argininosuccinate lyase subfamily.</text>
</comment>
<protein>
    <recommendedName>
        <fullName evidence="1">Argininosuccinate lyase</fullName>
        <shortName evidence="1">ASAL</shortName>
        <ecNumber evidence="1">4.3.2.1</ecNumber>
    </recommendedName>
    <alternativeName>
        <fullName evidence="1">Arginosuccinase</fullName>
    </alternativeName>
</protein>
<sequence length="440" mass="50352">MKLWGGRFKEEESKLMEDFNSSLSFDKKLYYEDIKGSIAHVKMLVNQNIIKEEEKEKILLGLEEILKEIDEGILKIEGDYEDIHSFVEINLINKIGNVGKKLHTGRSRNDQVALDMKLYAKKSTEEVIKCLKELMDSLIKVGNENNYIMPGYTHLQRAQVVTFRYHLLAYFEMFKRDEKRLKNALEILNESPLGSGALAGSTYSIDREYTAKLLGFRKPVDNFLDGVSDRDYIIELISKFSIIMMHLSRLSEELILWSSSEFRFIQIGDAYSTGSSIMPQKKNPDGAELIRGKTGRVYGDLIGILTVMKSLPLAYNKDMQEDKEPFFDAKDTVISCLKVMEGIISTLKVNKENLMKSVKKGFLNATEAADYLVNKGMAFRDAHKVIGEIVIYCEDKNSAIEDLSLEELKQFSDLFCEDIYGFIDYKSSINKGIKKEMGYF</sequence>